<feature type="chain" id="PRO_0000060372" description="tRNA (guanine-N(1)-)-methyltransferase">
    <location>
        <begin position="1"/>
        <end position="235"/>
    </location>
</feature>
<feature type="binding site" evidence="1">
    <location>
        <position position="114"/>
    </location>
    <ligand>
        <name>S-adenosyl-L-methionine</name>
        <dbReference type="ChEBI" id="CHEBI:59789"/>
    </ligand>
</feature>
<feature type="binding site" evidence="1">
    <location>
        <begin position="134"/>
        <end position="139"/>
    </location>
    <ligand>
        <name>S-adenosyl-L-methionine</name>
        <dbReference type="ChEBI" id="CHEBI:59789"/>
    </ligand>
</feature>
<feature type="sequence conflict" description="In Ref. 2; CAI27431." evidence="2" ref="2">
    <original>K</original>
    <variation>I</variation>
    <location>
        <position position="49"/>
    </location>
</feature>
<protein>
    <recommendedName>
        <fullName evidence="1">tRNA (guanine-N(1)-)-methyltransferase</fullName>
        <ecNumber evidence="1">2.1.1.228</ecNumber>
    </recommendedName>
    <alternativeName>
        <fullName evidence="1">M1G-methyltransferase</fullName>
    </alternativeName>
    <alternativeName>
        <fullName evidence="1">tRNA [GM37] methyltransferase</fullName>
    </alternativeName>
</protein>
<evidence type="ECO:0000255" key="1">
    <source>
        <dbReference type="HAMAP-Rule" id="MF_00605"/>
    </source>
</evidence>
<evidence type="ECO:0000305" key="2"/>
<comment type="function">
    <text evidence="1">Specifically methylates guanosine-37 in various tRNAs.</text>
</comment>
<comment type="catalytic activity">
    <reaction evidence="1">
        <text>guanosine(37) in tRNA + S-adenosyl-L-methionine = N(1)-methylguanosine(37) in tRNA + S-adenosyl-L-homocysteine + H(+)</text>
        <dbReference type="Rhea" id="RHEA:36899"/>
        <dbReference type="Rhea" id="RHEA-COMP:10145"/>
        <dbReference type="Rhea" id="RHEA-COMP:10147"/>
        <dbReference type="ChEBI" id="CHEBI:15378"/>
        <dbReference type="ChEBI" id="CHEBI:57856"/>
        <dbReference type="ChEBI" id="CHEBI:59789"/>
        <dbReference type="ChEBI" id="CHEBI:73542"/>
        <dbReference type="ChEBI" id="CHEBI:74269"/>
        <dbReference type="EC" id="2.1.1.228"/>
    </reaction>
</comment>
<comment type="subunit">
    <text evidence="1">Homodimer.</text>
</comment>
<comment type="subcellular location">
    <subcellularLocation>
        <location evidence="1">Cytoplasm</location>
    </subcellularLocation>
</comment>
<comment type="similarity">
    <text evidence="1">Belongs to the RNA methyltransferase TrmD family.</text>
</comment>
<sequence length="235" mass="26204">MVFNVNILTIFPEMFPGTLGYSVIGKALNKGIWNLNVIDIRSFATDKHKTVDDKPYGGGPGMIMKADVIGSAIDNVLSTNKETKLIYMSPSGVKLNQDISGQLAHFSNITILCGRFEGIDRRVLDFYDFYEISIGDYILSGGEVASMVLIETCVRLIPGVVSNVDSIRDESFTASYGLEYSQYTRPANWRGLEVPSVLVSGNHKKINLWKTQQSYRITKQRRPELTNTADGDIYE</sequence>
<reference key="1">
    <citation type="journal article" date="2005" name="Proc. Natl. Acad. Sci. U.S.A.">
        <title>The genome of the heartwater agent Ehrlichia ruminantium contains multiple tandem repeats of actively variable copy number.</title>
        <authorList>
            <person name="Collins N.E."/>
            <person name="Liebenberg J."/>
            <person name="de Villiers E.P."/>
            <person name="Brayton K.A."/>
            <person name="Louw E."/>
            <person name="Pretorius A."/>
            <person name="Faber F.E."/>
            <person name="van Heerden H."/>
            <person name="Josemans A."/>
            <person name="van Kleef M."/>
            <person name="Steyn H.C."/>
            <person name="van Strijp M.F."/>
            <person name="Zweygarth E."/>
            <person name="Jongejan F."/>
            <person name="Maillard J.C."/>
            <person name="Berthier D."/>
            <person name="Botha M."/>
            <person name="Joubert F."/>
            <person name="Corton C.H."/>
            <person name="Thomson N.R."/>
            <person name="Allsopp M.T."/>
            <person name="Allsopp B.A."/>
        </authorList>
    </citation>
    <scope>NUCLEOTIDE SEQUENCE [LARGE SCALE GENOMIC DNA]</scope>
    <source>
        <strain>Welgevonden</strain>
    </source>
</reference>
<reference key="2">
    <citation type="journal article" date="2006" name="J. Bacteriol.">
        <title>Comparative genomic analysis of three strains of Ehrlichia ruminantium reveals an active process of genome size plasticity.</title>
        <authorList>
            <person name="Frutos R."/>
            <person name="Viari A."/>
            <person name="Ferraz C."/>
            <person name="Morgat A."/>
            <person name="Eychenie S."/>
            <person name="Kandassamy Y."/>
            <person name="Chantal I."/>
            <person name="Bensaid A."/>
            <person name="Coissac E."/>
            <person name="Vachiery N."/>
            <person name="Demaille J."/>
            <person name="Martinez D."/>
        </authorList>
    </citation>
    <scope>NUCLEOTIDE SEQUENCE [LARGE SCALE GENOMIC DNA]</scope>
    <source>
        <strain>Welgevonden</strain>
    </source>
</reference>
<accession>Q5H9Z7</accession>
<accession>Q5FCC6</accession>
<proteinExistence type="inferred from homology"/>
<name>TRMD_EHRRW</name>
<dbReference type="EC" id="2.1.1.228" evidence="1"/>
<dbReference type="EMBL" id="CR767821">
    <property type="protein sequence ID" value="CAH58621.1"/>
    <property type="molecule type" value="Genomic_DNA"/>
</dbReference>
<dbReference type="EMBL" id="CR925678">
    <property type="protein sequence ID" value="CAI27431.1"/>
    <property type="molecule type" value="Genomic_DNA"/>
</dbReference>
<dbReference type="RefSeq" id="WP_011155564.1">
    <property type="nucleotide sequence ID" value="NC_005295.2"/>
</dbReference>
<dbReference type="RefSeq" id="WP_011256196.1">
    <property type="nucleotide sequence ID" value="NC_006832.1"/>
</dbReference>
<dbReference type="SMR" id="Q5H9Z7"/>
<dbReference type="GeneID" id="33058247"/>
<dbReference type="KEGG" id="eru:Erum8860"/>
<dbReference type="KEGG" id="erw:ERWE_CDS_09370"/>
<dbReference type="eggNOG" id="COG0336">
    <property type="taxonomic scope" value="Bacteria"/>
</dbReference>
<dbReference type="HOGENOM" id="CLU_047363_0_1_5"/>
<dbReference type="Proteomes" id="UP000001021">
    <property type="component" value="Chromosome"/>
</dbReference>
<dbReference type="GO" id="GO:0005829">
    <property type="term" value="C:cytosol"/>
    <property type="evidence" value="ECO:0007669"/>
    <property type="project" value="TreeGrafter"/>
</dbReference>
<dbReference type="GO" id="GO:0052906">
    <property type="term" value="F:tRNA (guanine(37)-N1)-methyltransferase activity"/>
    <property type="evidence" value="ECO:0007669"/>
    <property type="project" value="UniProtKB-UniRule"/>
</dbReference>
<dbReference type="GO" id="GO:0002939">
    <property type="term" value="P:tRNA N1-guanine methylation"/>
    <property type="evidence" value="ECO:0007669"/>
    <property type="project" value="TreeGrafter"/>
</dbReference>
<dbReference type="CDD" id="cd18080">
    <property type="entry name" value="TrmD-like"/>
    <property type="match status" value="1"/>
</dbReference>
<dbReference type="FunFam" id="3.40.1280.10:FF:000001">
    <property type="entry name" value="tRNA (guanine-N(1)-)-methyltransferase"/>
    <property type="match status" value="1"/>
</dbReference>
<dbReference type="Gene3D" id="3.40.1280.10">
    <property type="match status" value="1"/>
</dbReference>
<dbReference type="Gene3D" id="1.10.1270.20">
    <property type="entry name" value="tRNA(m1g37)methyltransferase, domain 2"/>
    <property type="match status" value="1"/>
</dbReference>
<dbReference type="HAMAP" id="MF_00605">
    <property type="entry name" value="TrmD"/>
    <property type="match status" value="1"/>
</dbReference>
<dbReference type="InterPro" id="IPR029028">
    <property type="entry name" value="Alpha/beta_knot_MTases"/>
</dbReference>
<dbReference type="InterPro" id="IPR023148">
    <property type="entry name" value="tRNA_m1G_MeTrfase_C_sf"/>
</dbReference>
<dbReference type="InterPro" id="IPR002649">
    <property type="entry name" value="tRNA_m1G_MeTrfase_TrmD"/>
</dbReference>
<dbReference type="InterPro" id="IPR029026">
    <property type="entry name" value="tRNA_m1G_MTases_N"/>
</dbReference>
<dbReference type="InterPro" id="IPR016009">
    <property type="entry name" value="tRNA_MeTrfase_TRMD/TRM10"/>
</dbReference>
<dbReference type="NCBIfam" id="NF000648">
    <property type="entry name" value="PRK00026.1"/>
    <property type="match status" value="1"/>
</dbReference>
<dbReference type="NCBIfam" id="TIGR00088">
    <property type="entry name" value="trmD"/>
    <property type="match status" value="1"/>
</dbReference>
<dbReference type="PANTHER" id="PTHR46417">
    <property type="entry name" value="TRNA (GUANINE-N(1)-)-METHYLTRANSFERASE"/>
    <property type="match status" value="1"/>
</dbReference>
<dbReference type="PANTHER" id="PTHR46417:SF1">
    <property type="entry name" value="TRNA (GUANINE-N(1)-)-METHYLTRANSFERASE"/>
    <property type="match status" value="1"/>
</dbReference>
<dbReference type="Pfam" id="PF01746">
    <property type="entry name" value="tRNA_m1G_MT"/>
    <property type="match status" value="1"/>
</dbReference>
<dbReference type="PIRSF" id="PIRSF000386">
    <property type="entry name" value="tRNA_mtase"/>
    <property type="match status" value="1"/>
</dbReference>
<dbReference type="SUPFAM" id="SSF75217">
    <property type="entry name" value="alpha/beta knot"/>
    <property type="match status" value="1"/>
</dbReference>
<gene>
    <name evidence="1" type="primary">trmD</name>
    <name type="ordered locus">Erum8860</name>
    <name type="ordered locus">ERWE_CDS_09370</name>
</gene>
<keyword id="KW-0963">Cytoplasm</keyword>
<keyword id="KW-0489">Methyltransferase</keyword>
<keyword id="KW-0949">S-adenosyl-L-methionine</keyword>
<keyword id="KW-0808">Transferase</keyword>
<keyword id="KW-0819">tRNA processing</keyword>
<organism>
    <name type="scientific">Ehrlichia ruminantium (strain Welgevonden)</name>
    <dbReference type="NCBI Taxonomy" id="254945"/>
    <lineage>
        <taxon>Bacteria</taxon>
        <taxon>Pseudomonadati</taxon>
        <taxon>Pseudomonadota</taxon>
        <taxon>Alphaproteobacteria</taxon>
        <taxon>Rickettsiales</taxon>
        <taxon>Anaplasmataceae</taxon>
        <taxon>Ehrlichia</taxon>
    </lineage>
</organism>